<geneLocation type="chloroplast"/>
<reference key="1">
    <citation type="journal article" date="1985" name="EMBO J.">
        <title>The wheat chloroplast gene for CF-0 subunit I of ATP synthase contains a large intron.</title>
        <authorList>
            <person name="Bird C.R."/>
            <person name="Koller B."/>
            <person name="Auffret A.D."/>
            <person name="Huttly A.K."/>
            <person name="Howe C.J."/>
            <person name="Dyer T.A."/>
            <person name="Gray J.C."/>
        </authorList>
    </citation>
    <scope>NUCLEOTIDE SEQUENCE [GENOMIC DNA]</scope>
</reference>
<reference key="2">
    <citation type="journal article" date="2000" name="Plant Mol. Biol. Rep.">
        <title>Chinese spring wheat (Triticum aestivum L.) chloroplast genome: complete sequence and contig clones.</title>
        <authorList>
            <person name="Ogihara Y."/>
            <person name="Isono K."/>
            <person name="Kojima T."/>
            <person name="Endo A."/>
            <person name="Hanaoka M."/>
            <person name="Shiina T."/>
            <person name="Terachi T."/>
            <person name="Utsugi S."/>
            <person name="Murata M."/>
            <person name="Mori N."/>
            <person name="Takumi S."/>
            <person name="Ikeo K."/>
            <person name="Gojobori T."/>
            <person name="Murai R."/>
            <person name="Murai K."/>
            <person name="Matsuoka Y."/>
            <person name="Ohnishi Y."/>
            <person name="Tajiri H."/>
            <person name="Tsunewaki K."/>
        </authorList>
    </citation>
    <scope>NUCLEOTIDE SEQUENCE [LARGE SCALE GENOMIC DNA]</scope>
    <source>
        <strain>cv. Chinese Spring</strain>
    </source>
</reference>
<proteinExistence type="inferred from homology"/>
<protein>
    <recommendedName>
        <fullName evidence="1">ATP synthase subunit b, chloroplastic</fullName>
    </recommendedName>
    <alternativeName>
        <fullName evidence="1">ATP synthase F(0) sector subunit b</fullName>
    </alternativeName>
    <alternativeName>
        <fullName evidence="1">ATPase subunit I</fullName>
    </alternativeName>
</protein>
<comment type="function">
    <text evidence="1">F(1)F(0) ATP synthase produces ATP from ADP in the presence of a proton or sodium gradient. F-type ATPases consist of two structural domains, F(1) containing the extramembraneous catalytic core and F(0) containing the membrane proton channel, linked together by a central stalk and a peripheral stalk. During catalysis, ATP synthesis in the catalytic domain of F(1) is coupled via a rotary mechanism of the central stalk subunits to proton translocation.</text>
</comment>
<comment type="function">
    <text evidence="1">Component of the F(0) channel, it forms part of the peripheral stalk, linking F(1) to F(0).</text>
</comment>
<comment type="subunit">
    <text evidence="1">F-type ATPases have 2 components, F(1) - the catalytic core - and F(0) - the membrane proton channel. F(1) has five subunits: alpha(3), beta(3), gamma(1), delta(1), epsilon(1). F(0) has four main subunits: a(1), b(1), b'(1) and c(10-14). The alpha and beta chains form an alternating ring which encloses part of the gamma chain. F(1) is attached to F(0) by a central stalk formed by the gamma and epsilon chains, while a peripheral stalk is formed by the delta, b and b' chains.</text>
</comment>
<comment type="subcellular location">
    <subcellularLocation>
        <location evidence="1">Plastid</location>
        <location evidence="1">Chloroplast thylakoid membrane</location>
        <topology evidence="1">Single-pass membrane protein</topology>
    </subcellularLocation>
</comment>
<comment type="miscellaneous">
    <text>In plastids the F-type ATPase is also known as CF(1)CF(0).</text>
</comment>
<comment type="similarity">
    <text evidence="1">Belongs to the ATPase B chain family.</text>
</comment>
<accession>P06528</accession>
<evidence type="ECO:0000255" key="1">
    <source>
        <dbReference type="HAMAP-Rule" id="MF_01398"/>
    </source>
</evidence>
<keyword id="KW-0066">ATP synthesis</keyword>
<keyword id="KW-0067">ATP-binding</keyword>
<keyword id="KW-0138">CF(0)</keyword>
<keyword id="KW-0150">Chloroplast</keyword>
<keyword id="KW-0375">Hydrogen ion transport</keyword>
<keyword id="KW-0406">Ion transport</keyword>
<keyword id="KW-0472">Membrane</keyword>
<keyword id="KW-0547">Nucleotide-binding</keyword>
<keyword id="KW-0934">Plastid</keyword>
<keyword id="KW-1185">Reference proteome</keyword>
<keyword id="KW-0793">Thylakoid</keyword>
<keyword id="KW-0812">Transmembrane</keyword>
<keyword id="KW-1133">Transmembrane helix</keyword>
<keyword id="KW-0813">Transport</keyword>
<organism>
    <name type="scientific">Triticum aestivum</name>
    <name type="common">Wheat</name>
    <dbReference type="NCBI Taxonomy" id="4565"/>
    <lineage>
        <taxon>Eukaryota</taxon>
        <taxon>Viridiplantae</taxon>
        <taxon>Streptophyta</taxon>
        <taxon>Embryophyta</taxon>
        <taxon>Tracheophyta</taxon>
        <taxon>Spermatophyta</taxon>
        <taxon>Magnoliopsida</taxon>
        <taxon>Liliopsida</taxon>
        <taxon>Poales</taxon>
        <taxon>Poaceae</taxon>
        <taxon>BOP clade</taxon>
        <taxon>Pooideae</taxon>
        <taxon>Triticodae</taxon>
        <taxon>Triticeae</taxon>
        <taxon>Triticinae</taxon>
        <taxon>Triticum</taxon>
    </lineage>
</organism>
<feature type="chain" id="PRO_0000082425" description="ATP synthase subunit b, chloroplastic">
    <location>
        <begin position="1"/>
        <end position="183"/>
    </location>
</feature>
<feature type="transmembrane region" description="Helical" evidence="1">
    <location>
        <begin position="27"/>
        <end position="49"/>
    </location>
</feature>
<gene>
    <name evidence="1" type="primary">atpF</name>
</gene>
<sequence length="183" mass="20977">MKNVTHSFVFLAHWPSAGSFGLNTDILATNLINLTVVVGVLIFFGKGVLKDLLDNRKQRILSTIRNSEELRRGTIEQLEKARIRLQKVELEADEYRMNGYSEIEREKANLINATSISLEQLEKSKNETLYFEKQRAMNQVRQRVFQQAVQGALGTLNSCLNTELHFRTIRANIGILGSLEWKR</sequence>
<name>ATPF_WHEAT</name>
<dbReference type="EMBL" id="X02595">
    <property type="protein sequence ID" value="CAA26438.1"/>
    <property type="molecule type" value="Genomic_DNA"/>
</dbReference>
<dbReference type="EMBL" id="AB042240">
    <property type="protein sequence ID" value="BAB47030.1"/>
    <property type="molecule type" value="Genomic_DNA"/>
</dbReference>
<dbReference type="PIR" id="A22721">
    <property type="entry name" value="PWWT1"/>
</dbReference>
<dbReference type="RefSeq" id="NP_114255.1">
    <property type="nucleotide sequence ID" value="NC_002762.1"/>
</dbReference>
<dbReference type="SMR" id="P06528"/>
<dbReference type="STRING" id="4565.P06528"/>
<dbReference type="PaxDb" id="4565-EPlTAEP00000010028"/>
<dbReference type="EnsemblPlants" id="TraesARI7A03G04013460.1">
    <property type="protein sequence ID" value="TraesARI7A03G04013460.1"/>
    <property type="gene ID" value="TraesARI7A03G04013460"/>
</dbReference>
<dbReference type="EnsemblPlants" id="TraesRN7A0100054100.1">
    <property type="protein sequence ID" value="TraesRN7A0100054100.1"/>
    <property type="gene ID" value="TraesRN7A0100054100"/>
</dbReference>
<dbReference type="GeneID" id="803099"/>
<dbReference type="Gramene" id="TraesARI7A03G04013460.1">
    <property type="protein sequence ID" value="TraesARI7A03G04013460.1"/>
    <property type="gene ID" value="TraesARI7A03G04013460"/>
</dbReference>
<dbReference type="Gramene" id="TraesRN7A0100054100.1">
    <property type="protein sequence ID" value="TraesRN7A0100054100.1"/>
    <property type="gene ID" value="TraesRN7A0100054100"/>
</dbReference>
<dbReference type="KEGG" id="taes:803099"/>
<dbReference type="eggNOG" id="ENOG502S22I">
    <property type="taxonomic scope" value="Eukaryota"/>
</dbReference>
<dbReference type="Proteomes" id="UP000019116">
    <property type="component" value="Chloroplast"/>
</dbReference>
<dbReference type="GO" id="GO:0009535">
    <property type="term" value="C:chloroplast thylakoid membrane"/>
    <property type="evidence" value="ECO:0007669"/>
    <property type="project" value="UniProtKB-SubCell"/>
</dbReference>
<dbReference type="GO" id="GO:0045259">
    <property type="term" value="C:proton-transporting ATP synthase complex"/>
    <property type="evidence" value="ECO:0007669"/>
    <property type="project" value="UniProtKB-KW"/>
</dbReference>
<dbReference type="GO" id="GO:0005524">
    <property type="term" value="F:ATP binding"/>
    <property type="evidence" value="ECO:0007669"/>
    <property type="project" value="UniProtKB-KW"/>
</dbReference>
<dbReference type="GO" id="GO:0046933">
    <property type="term" value="F:proton-transporting ATP synthase activity, rotational mechanism"/>
    <property type="evidence" value="ECO:0007669"/>
    <property type="project" value="UniProtKB-UniRule"/>
</dbReference>
<dbReference type="CDD" id="cd06503">
    <property type="entry name" value="ATP-synt_Fo_b"/>
    <property type="match status" value="1"/>
</dbReference>
<dbReference type="HAMAP" id="MF_01398">
    <property type="entry name" value="ATP_synth_b_bprime"/>
    <property type="match status" value="1"/>
</dbReference>
<dbReference type="InterPro" id="IPR002146">
    <property type="entry name" value="ATP_synth_b/b'su_bac/chlpt"/>
</dbReference>
<dbReference type="PANTHER" id="PTHR34264">
    <property type="entry name" value="ATP SYNTHASE SUBUNIT B, CHLOROPLASTIC"/>
    <property type="match status" value="1"/>
</dbReference>
<dbReference type="PANTHER" id="PTHR34264:SF8">
    <property type="entry name" value="ATP SYNTHASE SUBUNIT B, CHLOROPLASTIC"/>
    <property type="match status" value="1"/>
</dbReference>
<dbReference type="Pfam" id="PF00430">
    <property type="entry name" value="ATP-synt_B"/>
    <property type="match status" value="1"/>
</dbReference>